<gene>
    <name type="ordered locus">HI_1107</name>
</gene>
<organism>
    <name type="scientific">Haemophilus influenzae (strain ATCC 51907 / DSM 11121 / KW20 / Rd)</name>
    <dbReference type="NCBI Taxonomy" id="71421"/>
    <lineage>
        <taxon>Bacteria</taxon>
        <taxon>Pseudomonadati</taxon>
        <taxon>Pseudomonadota</taxon>
        <taxon>Gammaproteobacteria</taxon>
        <taxon>Pasteurellales</taxon>
        <taxon>Pasteurellaceae</taxon>
        <taxon>Haemophilus</taxon>
    </lineage>
</organism>
<dbReference type="EMBL" id="L42023">
    <property type="protein sequence ID" value="AAC22762.1"/>
    <property type="molecule type" value="Genomic_DNA"/>
</dbReference>
<dbReference type="PIR" id="I64182">
    <property type="entry name" value="I64182"/>
</dbReference>
<dbReference type="RefSeq" id="NP_439264.1">
    <property type="nucleotide sequence ID" value="NC_000907.1"/>
</dbReference>
<dbReference type="STRING" id="71421.HI_1107"/>
<dbReference type="EnsemblBacteria" id="AAC22762">
    <property type="protein sequence ID" value="AAC22762"/>
    <property type="gene ID" value="HI_1107"/>
</dbReference>
<dbReference type="KEGG" id="hin:HI_1107"/>
<dbReference type="PATRIC" id="fig|71421.8.peg.1155"/>
<dbReference type="eggNOG" id="COG1757">
    <property type="taxonomic scope" value="Bacteria"/>
</dbReference>
<dbReference type="HOGENOM" id="CLU_033405_1_1_6"/>
<dbReference type="OrthoDB" id="9762978at2"/>
<dbReference type="PhylomeDB" id="Q57007"/>
<dbReference type="BioCyc" id="HINF71421:G1GJ1-1142-MONOMER"/>
<dbReference type="Proteomes" id="UP000000579">
    <property type="component" value="Chromosome"/>
</dbReference>
<dbReference type="GO" id="GO:0005886">
    <property type="term" value="C:plasma membrane"/>
    <property type="evidence" value="ECO:0007669"/>
    <property type="project" value="UniProtKB-SubCell"/>
</dbReference>
<dbReference type="GO" id="GO:0015385">
    <property type="term" value="F:sodium:proton antiporter activity"/>
    <property type="evidence" value="ECO:0000318"/>
    <property type="project" value="GO_Central"/>
</dbReference>
<dbReference type="InterPro" id="IPR004770">
    <property type="entry name" value="Na/H_antiport_NhaC"/>
</dbReference>
<dbReference type="InterPro" id="IPR018461">
    <property type="entry name" value="Na/H_Antiport_NhaC-like_C"/>
</dbReference>
<dbReference type="InterPro" id="IPR052180">
    <property type="entry name" value="NhaC_Na-H+_Antiporter"/>
</dbReference>
<dbReference type="NCBIfam" id="TIGR00931">
    <property type="entry name" value="antiport_nhaC"/>
    <property type="match status" value="1"/>
</dbReference>
<dbReference type="PANTHER" id="PTHR33451">
    <property type="entry name" value="MALATE-2H(+)/NA(+)-LACTATE ANTIPORTER"/>
    <property type="match status" value="1"/>
</dbReference>
<dbReference type="PANTHER" id="PTHR33451:SF3">
    <property type="entry name" value="MALATE-2H(+)_NA(+)-LACTATE ANTIPORTER"/>
    <property type="match status" value="1"/>
</dbReference>
<dbReference type="Pfam" id="PF03553">
    <property type="entry name" value="Na_H_antiporter"/>
    <property type="match status" value="1"/>
</dbReference>
<comment type="subcellular location">
    <subcellularLocation>
        <location evidence="2">Cell membrane</location>
        <topology evidence="2">Multi-pass membrane protein</topology>
    </subcellularLocation>
</comment>
<comment type="similarity">
    <text evidence="2">Belongs to the NhaC Na(+)/H(+) (TC 2.A.35) antiporter family.</text>
</comment>
<accession>Q57007</accession>
<accession>P96339</accession>
<reference key="1">
    <citation type="journal article" date="1995" name="Science">
        <title>Whole-genome random sequencing and assembly of Haemophilus influenzae Rd.</title>
        <authorList>
            <person name="Fleischmann R.D."/>
            <person name="Adams M.D."/>
            <person name="White O."/>
            <person name="Clayton R.A."/>
            <person name="Kirkness E.F."/>
            <person name="Kerlavage A.R."/>
            <person name="Bult C.J."/>
            <person name="Tomb J.-F."/>
            <person name="Dougherty B.A."/>
            <person name="Merrick J.M."/>
            <person name="McKenney K."/>
            <person name="Sutton G.G."/>
            <person name="FitzHugh W."/>
            <person name="Fields C.A."/>
            <person name="Gocayne J.D."/>
            <person name="Scott J.D."/>
            <person name="Shirley R."/>
            <person name="Liu L.-I."/>
            <person name="Glodek A."/>
            <person name="Kelley J.M."/>
            <person name="Weidman J.F."/>
            <person name="Phillips C.A."/>
            <person name="Spriggs T."/>
            <person name="Hedblom E."/>
            <person name="Cotton M.D."/>
            <person name="Utterback T.R."/>
            <person name="Hanna M.C."/>
            <person name="Nguyen D.T."/>
            <person name="Saudek D.M."/>
            <person name="Brandon R.C."/>
            <person name="Fine L.D."/>
            <person name="Fritchman J.L."/>
            <person name="Fuhrmann J.L."/>
            <person name="Geoghagen N.S.M."/>
            <person name="Gnehm C.L."/>
            <person name="McDonald L.A."/>
            <person name="Small K.V."/>
            <person name="Fraser C.M."/>
            <person name="Smith H.O."/>
            <person name="Venter J.C."/>
        </authorList>
    </citation>
    <scope>NUCLEOTIDE SEQUENCE [LARGE SCALE GENOMIC DNA]</scope>
    <source>
        <strain>ATCC 51907 / DSM 11121 / KW20 / Rd</strain>
    </source>
</reference>
<feature type="chain" id="PRO_0000052418" description="Uncharacterized Na(+)/H(+) antiporter HI_1107">
    <location>
        <begin position="1"/>
        <end position="468"/>
    </location>
</feature>
<feature type="transmembrane region" description="Helical" evidence="1">
    <location>
        <begin position="13"/>
        <end position="33"/>
    </location>
</feature>
<feature type="transmembrane region" description="Helical" evidence="1">
    <location>
        <begin position="40"/>
        <end position="60"/>
    </location>
</feature>
<feature type="transmembrane region" description="Helical" evidence="1">
    <location>
        <begin position="76"/>
        <end position="96"/>
    </location>
</feature>
<feature type="transmembrane region" description="Helical" evidence="1">
    <location>
        <begin position="112"/>
        <end position="132"/>
    </location>
</feature>
<feature type="transmembrane region" description="Helical" evidence="1">
    <location>
        <begin position="141"/>
        <end position="161"/>
    </location>
</feature>
<feature type="transmembrane region" description="Helical" evidence="1">
    <location>
        <begin position="194"/>
        <end position="214"/>
    </location>
</feature>
<feature type="transmembrane region" description="Helical" evidence="1">
    <location>
        <begin position="237"/>
        <end position="257"/>
    </location>
</feature>
<feature type="transmembrane region" description="Helical" evidence="1">
    <location>
        <begin position="260"/>
        <end position="280"/>
    </location>
</feature>
<feature type="transmembrane region" description="Helical" evidence="1">
    <location>
        <begin position="328"/>
        <end position="348"/>
    </location>
</feature>
<feature type="transmembrane region" description="Helical" evidence="1">
    <location>
        <begin position="354"/>
        <end position="374"/>
    </location>
</feature>
<feature type="transmembrane region" description="Helical" evidence="1">
    <location>
        <begin position="414"/>
        <end position="434"/>
    </location>
</feature>
<feature type="transmembrane region" description="Helical" evidence="1">
    <location>
        <begin position="443"/>
        <end position="463"/>
    </location>
</feature>
<keyword id="KW-0050">Antiport</keyword>
<keyword id="KW-1003">Cell membrane</keyword>
<keyword id="KW-0406">Ion transport</keyword>
<keyword id="KW-0472">Membrane</keyword>
<keyword id="KW-1185">Reference proteome</keyword>
<keyword id="KW-0915">Sodium</keyword>
<keyword id="KW-0739">Sodium transport</keyword>
<keyword id="KW-0812">Transmembrane</keyword>
<keyword id="KW-1133">Transmembrane helix</keyword>
<keyword id="KW-0813">Transport</keyword>
<sequence>MKTTHRTRMPTTLEAFSPIIVMLLLLGLGYALFDLPAEPLMIISTVFAGFLVFKLGHCYLDILDAISEKIAKTMPALLILITVGLLIGTWISGGTIPMMIYYGLKAISPEYLYVTALFLTAIVSICTGTSWGSAGTVGVAFMGVAIGLDANLAATAGAVVAGAYFGDKLSPLSDTTNIASAAAGVDLYEHIAHLLYTTLPSFILSATVYVVYGLNYDFSNVATPEKVNTMIHELEQVYHFNFLLLIPVAIVLWGSITKKPTIPVMLLSAFIAIINAILIQKFSLSDVINSAVNGFDTSMIHHTSVSSDLSRLLNRGGMNSMMGTLLICFCALSFAGVLQLSGALTVIIQKLLTFVHSTLSLIITTILCGLTMIGVTCNGQISILIPGEMLKNAYVEKGLHPKNLSRTAEDSATIIEPILPWTAAGAYMAGTLGVATLSYLPWAILCWSGIIFAIIYGASGIGIAKLKK</sequence>
<protein>
    <recommendedName>
        <fullName>Uncharacterized Na(+)/H(+) antiporter HI_1107</fullName>
    </recommendedName>
</protein>
<name>Y1107_HAEIN</name>
<proteinExistence type="inferred from homology"/>
<evidence type="ECO:0000255" key="1"/>
<evidence type="ECO:0000305" key="2"/>